<gene>
    <name evidence="1" type="primary">bioD</name>
    <name type="ordered locus">jhp_0025</name>
</gene>
<name>BIOD_HELPJ</name>
<feature type="chain" id="PRO_0000187972" description="ATP-dependent dethiobiotin synthetase BioD">
    <location>
        <begin position="1"/>
        <end position="218"/>
    </location>
</feature>
<feature type="active site" evidence="1">
    <location>
        <position position="35"/>
    </location>
</feature>
<feature type="binding site" evidence="1">
    <location>
        <begin position="10"/>
        <end position="15"/>
    </location>
    <ligand>
        <name>ATP</name>
        <dbReference type="ChEBI" id="CHEBI:30616"/>
    </ligand>
</feature>
<feature type="binding site" evidence="1">
    <location>
        <position position="14"/>
    </location>
    <ligand>
        <name>Mg(2+)</name>
        <dbReference type="ChEBI" id="CHEBI:18420"/>
    </ligand>
</feature>
<feature type="binding site" evidence="1">
    <location>
        <position position="39"/>
    </location>
    <ligand>
        <name>substrate</name>
    </ligand>
</feature>
<feature type="binding site" evidence="1">
    <location>
        <begin position="116"/>
        <end position="119"/>
    </location>
    <ligand>
        <name>ATP</name>
        <dbReference type="ChEBI" id="CHEBI:30616"/>
    </ligand>
</feature>
<feature type="binding site" evidence="1">
    <location>
        <position position="116"/>
    </location>
    <ligand>
        <name>Mg(2+)</name>
        <dbReference type="ChEBI" id="CHEBI:18420"/>
    </ligand>
</feature>
<feature type="binding site" evidence="1">
    <location>
        <begin position="176"/>
        <end position="177"/>
    </location>
    <ligand>
        <name>ATP</name>
        <dbReference type="ChEBI" id="CHEBI:30616"/>
    </ligand>
</feature>
<accession>Q9ZN34</accession>
<comment type="function">
    <text evidence="1">Catalyzes a mechanistically unusual reaction, the ATP-dependent insertion of CO2 between the N7 and N8 nitrogen atoms of 7,8-diaminopelargonic acid (DAPA, also called 7,8-diammoniononanoate) to form a ureido ring.</text>
</comment>
<comment type="catalytic activity">
    <reaction evidence="1">
        <text>(7R,8S)-7,8-diammoniononanoate + CO2 + ATP = (4R,5S)-dethiobiotin + ADP + phosphate + 3 H(+)</text>
        <dbReference type="Rhea" id="RHEA:15805"/>
        <dbReference type="ChEBI" id="CHEBI:15378"/>
        <dbReference type="ChEBI" id="CHEBI:16526"/>
        <dbReference type="ChEBI" id="CHEBI:30616"/>
        <dbReference type="ChEBI" id="CHEBI:43474"/>
        <dbReference type="ChEBI" id="CHEBI:149469"/>
        <dbReference type="ChEBI" id="CHEBI:149473"/>
        <dbReference type="ChEBI" id="CHEBI:456216"/>
        <dbReference type="EC" id="6.3.3.3"/>
    </reaction>
</comment>
<comment type="cofactor">
    <cofactor evidence="1">
        <name>Mg(2+)</name>
        <dbReference type="ChEBI" id="CHEBI:18420"/>
    </cofactor>
</comment>
<comment type="pathway">
    <text evidence="1">Cofactor biosynthesis; biotin biosynthesis; biotin from 7,8-diaminononanoate: step 1/2.</text>
</comment>
<comment type="subunit">
    <text evidence="1">Homodimer.</text>
</comment>
<comment type="subcellular location">
    <subcellularLocation>
        <location evidence="1">Cytoplasm</location>
    </subcellularLocation>
</comment>
<comment type="similarity">
    <text evidence="1">Belongs to the dethiobiotin synthetase family.</text>
</comment>
<proteinExistence type="inferred from homology"/>
<reference key="1">
    <citation type="journal article" date="1999" name="Nature">
        <title>Genomic sequence comparison of two unrelated isolates of the human gastric pathogen Helicobacter pylori.</title>
        <authorList>
            <person name="Alm R.A."/>
            <person name="Ling L.-S.L."/>
            <person name="Moir D.T."/>
            <person name="King B.L."/>
            <person name="Brown E.D."/>
            <person name="Doig P.C."/>
            <person name="Smith D.R."/>
            <person name="Noonan B."/>
            <person name="Guild B.C."/>
            <person name="deJonge B.L."/>
            <person name="Carmel G."/>
            <person name="Tummino P.J."/>
            <person name="Caruso A."/>
            <person name="Uria-Nickelsen M."/>
            <person name="Mills D.M."/>
            <person name="Ives C."/>
            <person name="Gibson R."/>
            <person name="Merberg D."/>
            <person name="Mills S.D."/>
            <person name="Jiang Q."/>
            <person name="Taylor D.E."/>
            <person name="Vovis G.F."/>
            <person name="Trust T.J."/>
        </authorList>
    </citation>
    <scope>NUCLEOTIDE SEQUENCE [LARGE SCALE GENOMIC DNA]</scope>
    <source>
        <strain>J99 / ATCC 700824</strain>
    </source>
</reference>
<evidence type="ECO:0000255" key="1">
    <source>
        <dbReference type="HAMAP-Rule" id="MF_00336"/>
    </source>
</evidence>
<protein>
    <recommendedName>
        <fullName evidence="1">ATP-dependent dethiobiotin synthetase BioD</fullName>
        <ecNumber evidence="1">6.3.3.3</ecNumber>
    </recommendedName>
    <alternativeName>
        <fullName evidence="1">DTB synthetase</fullName>
        <shortName evidence="1">DTBS</shortName>
    </alternativeName>
    <alternativeName>
        <fullName evidence="1">Dethiobiotin synthase</fullName>
    </alternativeName>
</protein>
<keyword id="KW-0067">ATP-binding</keyword>
<keyword id="KW-0093">Biotin biosynthesis</keyword>
<keyword id="KW-0963">Cytoplasm</keyword>
<keyword id="KW-0436">Ligase</keyword>
<keyword id="KW-0460">Magnesium</keyword>
<keyword id="KW-0479">Metal-binding</keyword>
<keyword id="KW-0547">Nucleotide-binding</keyword>
<organism>
    <name type="scientific">Helicobacter pylori (strain J99 / ATCC 700824)</name>
    <name type="common">Campylobacter pylori J99</name>
    <dbReference type="NCBI Taxonomy" id="85963"/>
    <lineage>
        <taxon>Bacteria</taxon>
        <taxon>Pseudomonadati</taxon>
        <taxon>Campylobacterota</taxon>
        <taxon>Epsilonproteobacteria</taxon>
        <taxon>Campylobacterales</taxon>
        <taxon>Helicobacteraceae</taxon>
        <taxon>Helicobacter</taxon>
    </lineage>
</organism>
<sequence>MLFISATNTNAGKTTCARLLAQYCNACGVKTILLKPIETGVNDAINHSSDAHLFLQDNRLLDRSLTLKDISFYRYHKASAPLIAQQEEDPNAPIDTDNLTQRLHNFTKTYDLVIVEGAGGLCVPITLEENMLDFALKLKAKMLLISHDNLGLINDCLLNDFLLKSYQLDYKIAINLRGNNTAFYSVSLPYIELFNKRSNNPIVIFQQSLKELMSFALK</sequence>
<dbReference type="EC" id="6.3.3.3" evidence="1"/>
<dbReference type="EMBL" id="AE001439">
    <property type="protein sequence ID" value="AAD05609.1"/>
    <property type="molecule type" value="Genomic_DNA"/>
</dbReference>
<dbReference type="PIR" id="G71982">
    <property type="entry name" value="G71982"/>
</dbReference>
<dbReference type="RefSeq" id="WP_000897486.1">
    <property type="nucleotide sequence ID" value="NC_000921.1"/>
</dbReference>
<dbReference type="SMR" id="Q9ZN34"/>
<dbReference type="KEGG" id="hpj:jhp_0025"/>
<dbReference type="PATRIC" id="fig|85963.30.peg.1015"/>
<dbReference type="eggNOG" id="COG0132">
    <property type="taxonomic scope" value="Bacteria"/>
</dbReference>
<dbReference type="UniPathway" id="UPA00078">
    <property type="reaction ID" value="UER00161"/>
</dbReference>
<dbReference type="Proteomes" id="UP000000804">
    <property type="component" value="Chromosome"/>
</dbReference>
<dbReference type="GO" id="GO:0005829">
    <property type="term" value="C:cytosol"/>
    <property type="evidence" value="ECO:0007669"/>
    <property type="project" value="TreeGrafter"/>
</dbReference>
<dbReference type="GO" id="GO:0005524">
    <property type="term" value="F:ATP binding"/>
    <property type="evidence" value="ECO:0007669"/>
    <property type="project" value="UniProtKB-UniRule"/>
</dbReference>
<dbReference type="GO" id="GO:0004141">
    <property type="term" value="F:dethiobiotin synthase activity"/>
    <property type="evidence" value="ECO:0007669"/>
    <property type="project" value="UniProtKB-UniRule"/>
</dbReference>
<dbReference type="GO" id="GO:0000287">
    <property type="term" value="F:magnesium ion binding"/>
    <property type="evidence" value="ECO:0007669"/>
    <property type="project" value="UniProtKB-UniRule"/>
</dbReference>
<dbReference type="GO" id="GO:0009102">
    <property type="term" value="P:biotin biosynthetic process"/>
    <property type="evidence" value="ECO:0007669"/>
    <property type="project" value="UniProtKB-UniRule"/>
</dbReference>
<dbReference type="CDD" id="cd03109">
    <property type="entry name" value="DTBS"/>
    <property type="match status" value="1"/>
</dbReference>
<dbReference type="FunFam" id="3.40.50.300:FF:003306">
    <property type="entry name" value="ATP-dependent dethiobiotin synthetase BioD"/>
    <property type="match status" value="1"/>
</dbReference>
<dbReference type="Gene3D" id="3.40.50.300">
    <property type="entry name" value="P-loop containing nucleotide triphosphate hydrolases"/>
    <property type="match status" value="1"/>
</dbReference>
<dbReference type="HAMAP" id="MF_00336">
    <property type="entry name" value="BioD"/>
    <property type="match status" value="1"/>
</dbReference>
<dbReference type="InterPro" id="IPR004472">
    <property type="entry name" value="DTB_synth_BioD"/>
</dbReference>
<dbReference type="InterPro" id="IPR027417">
    <property type="entry name" value="P-loop_NTPase"/>
</dbReference>
<dbReference type="NCBIfam" id="TIGR00347">
    <property type="entry name" value="bioD"/>
    <property type="match status" value="1"/>
</dbReference>
<dbReference type="PANTHER" id="PTHR43210:SF2">
    <property type="entry name" value="ATP-DEPENDENT DETHIOBIOTIN SYNTHETASE BIOD 2"/>
    <property type="match status" value="1"/>
</dbReference>
<dbReference type="PANTHER" id="PTHR43210">
    <property type="entry name" value="DETHIOBIOTIN SYNTHETASE"/>
    <property type="match status" value="1"/>
</dbReference>
<dbReference type="Pfam" id="PF13500">
    <property type="entry name" value="AAA_26"/>
    <property type="match status" value="1"/>
</dbReference>
<dbReference type="SUPFAM" id="SSF52540">
    <property type="entry name" value="P-loop containing nucleoside triphosphate hydrolases"/>
    <property type="match status" value="1"/>
</dbReference>